<name>AROQ_CITK8</name>
<sequence>MADKLHILLLNGPNLNMLGTREPDKYGTLTLTEIVNRLNAEADALNVTLDHLQSNAEYALIDRIHQAKDTVDYILINPAAFTHTSVAIRDALLAVSIPFIEIHLSNVHAREPFRQHSYLSDIAAGVICGFGADGYSYALQTAVKRLSQSH</sequence>
<proteinExistence type="inferred from homology"/>
<reference key="1">
    <citation type="submission" date="2007-08" db="EMBL/GenBank/DDBJ databases">
        <authorList>
            <consortium name="The Citrobacter koseri Genome Sequencing Project"/>
            <person name="McClelland M."/>
            <person name="Sanderson E.K."/>
            <person name="Porwollik S."/>
            <person name="Spieth J."/>
            <person name="Clifton W.S."/>
            <person name="Latreille P."/>
            <person name="Courtney L."/>
            <person name="Wang C."/>
            <person name="Pepin K."/>
            <person name="Bhonagiri V."/>
            <person name="Nash W."/>
            <person name="Johnson M."/>
            <person name="Thiruvilangam P."/>
            <person name="Wilson R."/>
        </authorList>
    </citation>
    <scope>NUCLEOTIDE SEQUENCE [LARGE SCALE GENOMIC DNA]</scope>
    <source>
        <strain>ATCC BAA-895 / CDC 4225-83 / SGSC4696</strain>
    </source>
</reference>
<dbReference type="EC" id="4.2.1.10" evidence="1"/>
<dbReference type="EMBL" id="CP000822">
    <property type="protein sequence ID" value="ABV15715.1"/>
    <property type="molecule type" value="Genomic_DNA"/>
</dbReference>
<dbReference type="RefSeq" id="WP_012135390.1">
    <property type="nucleotide sequence ID" value="NC_009792.1"/>
</dbReference>
<dbReference type="SMR" id="A8AQF2"/>
<dbReference type="STRING" id="290338.CKO_04665"/>
<dbReference type="GeneID" id="45138192"/>
<dbReference type="KEGG" id="cko:CKO_04665"/>
<dbReference type="HOGENOM" id="CLU_090968_1_0_6"/>
<dbReference type="OrthoDB" id="9790793at2"/>
<dbReference type="BRENDA" id="4.2.1.10">
    <property type="organism ID" value="1399"/>
</dbReference>
<dbReference type="UniPathway" id="UPA00053">
    <property type="reaction ID" value="UER00086"/>
</dbReference>
<dbReference type="Proteomes" id="UP000008148">
    <property type="component" value="Chromosome"/>
</dbReference>
<dbReference type="GO" id="GO:0003855">
    <property type="term" value="F:3-dehydroquinate dehydratase activity"/>
    <property type="evidence" value="ECO:0007669"/>
    <property type="project" value="UniProtKB-UniRule"/>
</dbReference>
<dbReference type="GO" id="GO:0008652">
    <property type="term" value="P:amino acid biosynthetic process"/>
    <property type="evidence" value="ECO:0007669"/>
    <property type="project" value="UniProtKB-KW"/>
</dbReference>
<dbReference type="GO" id="GO:0009073">
    <property type="term" value="P:aromatic amino acid family biosynthetic process"/>
    <property type="evidence" value="ECO:0007669"/>
    <property type="project" value="UniProtKB-KW"/>
</dbReference>
<dbReference type="GO" id="GO:0009423">
    <property type="term" value="P:chorismate biosynthetic process"/>
    <property type="evidence" value="ECO:0007669"/>
    <property type="project" value="UniProtKB-UniRule"/>
</dbReference>
<dbReference type="GO" id="GO:0019631">
    <property type="term" value="P:quinate catabolic process"/>
    <property type="evidence" value="ECO:0007669"/>
    <property type="project" value="TreeGrafter"/>
</dbReference>
<dbReference type="CDD" id="cd00466">
    <property type="entry name" value="DHQase_II"/>
    <property type="match status" value="1"/>
</dbReference>
<dbReference type="Gene3D" id="3.40.50.9100">
    <property type="entry name" value="Dehydroquinase, class II"/>
    <property type="match status" value="1"/>
</dbReference>
<dbReference type="HAMAP" id="MF_00169">
    <property type="entry name" value="AroQ"/>
    <property type="match status" value="1"/>
</dbReference>
<dbReference type="InterPro" id="IPR001874">
    <property type="entry name" value="DHquinase_II"/>
</dbReference>
<dbReference type="InterPro" id="IPR018509">
    <property type="entry name" value="DHquinase_II_CS"/>
</dbReference>
<dbReference type="InterPro" id="IPR036441">
    <property type="entry name" value="DHquinase_II_sf"/>
</dbReference>
<dbReference type="NCBIfam" id="TIGR01088">
    <property type="entry name" value="aroQ"/>
    <property type="match status" value="1"/>
</dbReference>
<dbReference type="NCBIfam" id="NF003804">
    <property type="entry name" value="PRK05395.1-1"/>
    <property type="match status" value="1"/>
</dbReference>
<dbReference type="NCBIfam" id="NF003805">
    <property type="entry name" value="PRK05395.1-2"/>
    <property type="match status" value="1"/>
</dbReference>
<dbReference type="NCBIfam" id="NF003806">
    <property type="entry name" value="PRK05395.1-3"/>
    <property type="match status" value="1"/>
</dbReference>
<dbReference type="NCBIfam" id="NF003807">
    <property type="entry name" value="PRK05395.1-4"/>
    <property type="match status" value="1"/>
</dbReference>
<dbReference type="PANTHER" id="PTHR21272">
    <property type="entry name" value="CATABOLIC 3-DEHYDROQUINASE"/>
    <property type="match status" value="1"/>
</dbReference>
<dbReference type="PANTHER" id="PTHR21272:SF3">
    <property type="entry name" value="CATABOLIC 3-DEHYDROQUINASE"/>
    <property type="match status" value="1"/>
</dbReference>
<dbReference type="Pfam" id="PF01220">
    <property type="entry name" value="DHquinase_II"/>
    <property type="match status" value="1"/>
</dbReference>
<dbReference type="PIRSF" id="PIRSF001399">
    <property type="entry name" value="DHquinase_II"/>
    <property type="match status" value="1"/>
</dbReference>
<dbReference type="SUPFAM" id="SSF52304">
    <property type="entry name" value="Type II 3-dehydroquinate dehydratase"/>
    <property type="match status" value="1"/>
</dbReference>
<dbReference type="PROSITE" id="PS01029">
    <property type="entry name" value="DEHYDROQUINASE_II"/>
    <property type="match status" value="1"/>
</dbReference>
<evidence type="ECO:0000255" key="1">
    <source>
        <dbReference type="HAMAP-Rule" id="MF_00169"/>
    </source>
</evidence>
<organism>
    <name type="scientific">Citrobacter koseri (strain ATCC BAA-895 / CDC 4225-83 / SGSC4696)</name>
    <dbReference type="NCBI Taxonomy" id="290338"/>
    <lineage>
        <taxon>Bacteria</taxon>
        <taxon>Pseudomonadati</taxon>
        <taxon>Pseudomonadota</taxon>
        <taxon>Gammaproteobacteria</taxon>
        <taxon>Enterobacterales</taxon>
        <taxon>Enterobacteriaceae</taxon>
        <taxon>Citrobacter</taxon>
    </lineage>
</organism>
<feature type="chain" id="PRO_1000023461" description="3-dehydroquinate dehydratase">
    <location>
        <begin position="1"/>
        <end position="150"/>
    </location>
</feature>
<feature type="active site" description="Proton acceptor" evidence="1">
    <location>
        <position position="26"/>
    </location>
</feature>
<feature type="active site" description="Proton donor" evidence="1">
    <location>
        <position position="103"/>
    </location>
</feature>
<feature type="binding site" evidence="1">
    <location>
        <position position="77"/>
    </location>
    <ligand>
        <name>substrate</name>
    </ligand>
</feature>
<feature type="binding site" evidence="1">
    <location>
        <position position="83"/>
    </location>
    <ligand>
        <name>substrate</name>
    </ligand>
</feature>
<feature type="binding site" evidence="1">
    <location>
        <position position="90"/>
    </location>
    <ligand>
        <name>substrate</name>
    </ligand>
</feature>
<feature type="binding site" evidence="1">
    <location>
        <begin position="104"/>
        <end position="105"/>
    </location>
    <ligand>
        <name>substrate</name>
    </ligand>
</feature>
<feature type="binding site" evidence="1">
    <location>
        <position position="114"/>
    </location>
    <ligand>
        <name>substrate</name>
    </ligand>
</feature>
<feature type="site" description="Transition state stabilizer" evidence="1">
    <location>
        <position position="21"/>
    </location>
</feature>
<comment type="function">
    <text evidence="1">Catalyzes a trans-dehydration via an enolate intermediate.</text>
</comment>
<comment type="catalytic activity">
    <reaction evidence="1">
        <text>3-dehydroquinate = 3-dehydroshikimate + H2O</text>
        <dbReference type="Rhea" id="RHEA:21096"/>
        <dbReference type="ChEBI" id="CHEBI:15377"/>
        <dbReference type="ChEBI" id="CHEBI:16630"/>
        <dbReference type="ChEBI" id="CHEBI:32364"/>
        <dbReference type="EC" id="4.2.1.10"/>
    </reaction>
</comment>
<comment type="pathway">
    <text evidence="1">Metabolic intermediate biosynthesis; chorismate biosynthesis; chorismate from D-erythrose 4-phosphate and phosphoenolpyruvate: step 3/7.</text>
</comment>
<comment type="subunit">
    <text evidence="1">Homododecamer.</text>
</comment>
<comment type="similarity">
    <text evidence="1">Belongs to the type-II 3-dehydroquinase family.</text>
</comment>
<protein>
    <recommendedName>
        <fullName evidence="1">3-dehydroquinate dehydratase</fullName>
        <shortName evidence="1">3-dehydroquinase</shortName>
        <ecNumber evidence="1">4.2.1.10</ecNumber>
    </recommendedName>
    <alternativeName>
        <fullName evidence="1">Type II DHQase</fullName>
    </alternativeName>
</protein>
<gene>
    <name evidence="1" type="primary">aroQ</name>
    <name type="ordered locus">CKO_04665</name>
</gene>
<keyword id="KW-0028">Amino-acid biosynthesis</keyword>
<keyword id="KW-0057">Aromatic amino acid biosynthesis</keyword>
<keyword id="KW-0456">Lyase</keyword>
<keyword id="KW-1185">Reference proteome</keyword>
<accession>A8AQF2</accession>